<proteinExistence type="inferred from homology"/>
<protein>
    <recommendedName>
        <fullName>Probable branched-chain-amino-acid aminotransferase</fullName>
        <shortName>BCAT</shortName>
        <ecNumber>2.6.1.42</ecNumber>
    </recommendedName>
</protein>
<reference key="1">
    <citation type="journal article" date="2001" name="Science">
        <title>Mechanisms of evolution in Rickettsia conorii and R. prowazekii.</title>
        <authorList>
            <person name="Ogata H."/>
            <person name="Audic S."/>
            <person name="Renesto-Audiffren P."/>
            <person name="Fournier P.-E."/>
            <person name="Barbe V."/>
            <person name="Samson D."/>
            <person name="Roux V."/>
            <person name="Cossart P."/>
            <person name="Weissenbach J."/>
            <person name="Claverie J.-M."/>
            <person name="Raoult D."/>
        </authorList>
    </citation>
    <scope>NUCLEOTIDE SEQUENCE [LARGE SCALE GENOMIC DNA]</scope>
    <source>
        <strain>ATCC VR-613 / Malish 7</strain>
    </source>
</reference>
<name>ILVE_RICCN</name>
<comment type="function">
    <text evidence="1">Acts on leucine, isoleucine and valine.</text>
</comment>
<comment type="catalytic activity">
    <reaction>
        <text>L-leucine + 2-oxoglutarate = 4-methyl-2-oxopentanoate + L-glutamate</text>
        <dbReference type="Rhea" id="RHEA:18321"/>
        <dbReference type="ChEBI" id="CHEBI:16810"/>
        <dbReference type="ChEBI" id="CHEBI:17865"/>
        <dbReference type="ChEBI" id="CHEBI:29985"/>
        <dbReference type="ChEBI" id="CHEBI:57427"/>
        <dbReference type="EC" id="2.6.1.42"/>
    </reaction>
</comment>
<comment type="catalytic activity">
    <reaction>
        <text>L-isoleucine + 2-oxoglutarate = (S)-3-methyl-2-oxopentanoate + L-glutamate</text>
        <dbReference type="Rhea" id="RHEA:24801"/>
        <dbReference type="ChEBI" id="CHEBI:16810"/>
        <dbReference type="ChEBI" id="CHEBI:29985"/>
        <dbReference type="ChEBI" id="CHEBI:35146"/>
        <dbReference type="ChEBI" id="CHEBI:58045"/>
        <dbReference type="EC" id="2.6.1.42"/>
    </reaction>
</comment>
<comment type="catalytic activity">
    <reaction>
        <text>L-valine + 2-oxoglutarate = 3-methyl-2-oxobutanoate + L-glutamate</text>
        <dbReference type="Rhea" id="RHEA:24813"/>
        <dbReference type="ChEBI" id="CHEBI:11851"/>
        <dbReference type="ChEBI" id="CHEBI:16810"/>
        <dbReference type="ChEBI" id="CHEBI:29985"/>
        <dbReference type="ChEBI" id="CHEBI:57762"/>
        <dbReference type="EC" id="2.6.1.42"/>
    </reaction>
</comment>
<comment type="cofactor">
    <cofactor evidence="1">
        <name>pyridoxal 5'-phosphate</name>
        <dbReference type="ChEBI" id="CHEBI:597326"/>
    </cofactor>
</comment>
<comment type="pathway">
    <text>Amino-acid biosynthesis; L-isoleucine biosynthesis; L-isoleucine from 2-oxobutanoate: step 4/4.</text>
</comment>
<comment type="pathway">
    <text>Amino-acid biosynthesis; L-leucine biosynthesis; L-leucine from 3-methyl-2-oxobutanoate: step 4/4.</text>
</comment>
<comment type="pathway">
    <text>Amino-acid biosynthesis; L-valine biosynthesis; L-valine from pyruvate: step 4/4.</text>
</comment>
<comment type="similarity">
    <text evidence="2">Belongs to the class-IV pyridoxal-phosphate-dependent aminotransferase family.</text>
</comment>
<keyword id="KW-0028">Amino-acid biosynthesis</keyword>
<keyword id="KW-0032">Aminotransferase</keyword>
<keyword id="KW-0100">Branched-chain amino acid biosynthesis</keyword>
<keyword id="KW-0663">Pyridoxal phosphate</keyword>
<keyword id="KW-0808">Transferase</keyword>
<sequence>MTMVKLEQIFWHVWINGDLVPYQFARIHVLTHSLHYSGSVFEGERAYNGKVFKLKEHTARLIKSAEALGLKVPYNVDEIIKAHECVIKQNNIKDAYIRPLIWCGDESLNITNQYLSTNLLIAGIPSMPRSFEKGINLHVSRWRKAMPDSTPVQSKSAAQYNMAITSKKEAKALGYEDALLLDYEGYIAECTTTNIFFVKDKILYTPIADRFLNGITRQTIIEIAKDLGLEVKEERLKLEQIEDFTGCFVTGTAIEVQNIDSIDLGNKKIIFDDHKIADRLKEEYRRVVRE</sequence>
<gene>
    <name type="primary">ilvE</name>
    <name type="ordered locus">RC0594</name>
</gene>
<evidence type="ECO:0000250" key="1"/>
<evidence type="ECO:0000305" key="2"/>
<organism>
    <name type="scientific">Rickettsia conorii (strain ATCC VR-613 / Malish 7)</name>
    <dbReference type="NCBI Taxonomy" id="272944"/>
    <lineage>
        <taxon>Bacteria</taxon>
        <taxon>Pseudomonadati</taxon>
        <taxon>Pseudomonadota</taxon>
        <taxon>Alphaproteobacteria</taxon>
        <taxon>Rickettsiales</taxon>
        <taxon>Rickettsiaceae</taxon>
        <taxon>Rickettsieae</taxon>
        <taxon>Rickettsia</taxon>
        <taxon>spotted fever group</taxon>
    </lineage>
</organism>
<accession>Q92I26</accession>
<dbReference type="EC" id="2.6.1.42"/>
<dbReference type="EMBL" id="AE006914">
    <property type="protein sequence ID" value="AAL03132.1"/>
    <property type="molecule type" value="Genomic_DNA"/>
</dbReference>
<dbReference type="PIR" id="B97774">
    <property type="entry name" value="B97774"/>
</dbReference>
<dbReference type="RefSeq" id="WP_010977226.1">
    <property type="nucleotide sequence ID" value="NC_003103.1"/>
</dbReference>
<dbReference type="SMR" id="Q92I26"/>
<dbReference type="GeneID" id="927689"/>
<dbReference type="KEGG" id="rco:RC0594"/>
<dbReference type="PATRIC" id="fig|272944.4.peg.679"/>
<dbReference type="HOGENOM" id="CLU_020844_3_1_5"/>
<dbReference type="UniPathway" id="UPA00047">
    <property type="reaction ID" value="UER00058"/>
</dbReference>
<dbReference type="UniPathway" id="UPA00048">
    <property type="reaction ID" value="UER00073"/>
</dbReference>
<dbReference type="UniPathway" id="UPA00049">
    <property type="reaction ID" value="UER00062"/>
</dbReference>
<dbReference type="Proteomes" id="UP000000816">
    <property type="component" value="Chromosome"/>
</dbReference>
<dbReference type="GO" id="GO:0052656">
    <property type="term" value="F:L-isoleucine-2-oxoglutarate transaminase activity"/>
    <property type="evidence" value="ECO:0007669"/>
    <property type="project" value="RHEA"/>
</dbReference>
<dbReference type="GO" id="GO:0052654">
    <property type="term" value="F:L-leucine-2-oxoglutarate transaminase activity"/>
    <property type="evidence" value="ECO:0007669"/>
    <property type="project" value="RHEA"/>
</dbReference>
<dbReference type="GO" id="GO:0052655">
    <property type="term" value="F:L-valine-2-oxoglutarate transaminase activity"/>
    <property type="evidence" value="ECO:0007669"/>
    <property type="project" value="RHEA"/>
</dbReference>
<dbReference type="GO" id="GO:0009097">
    <property type="term" value="P:isoleucine biosynthetic process"/>
    <property type="evidence" value="ECO:0007669"/>
    <property type="project" value="UniProtKB-UniPathway"/>
</dbReference>
<dbReference type="GO" id="GO:0009098">
    <property type="term" value="P:L-leucine biosynthetic process"/>
    <property type="evidence" value="ECO:0007669"/>
    <property type="project" value="UniProtKB-UniPathway"/>
</dbReference>
<dbReference type="GO" id="GO:0009099">
    <property type="term" value="P:L-valine biosynthetic process"/>
    <property type="evidence" value="ECO:0007669"/>
    <property type="project" value="UniProtKB-UniPathway"/>
</dbReference>
<dbReference type="FunFam" id="3.20.10.10:FF:000002">
    <property type="entry name" value="D-alanine aminotransferase"/>
    <property type="match status" value="1"/>
</dbReference>
<dbReference type="Gene3D" id="3.30.470.10">
    <property type="match status" value="1"/>
</dbReference>
<dbReference type="Gene3D" id="3.20.10.10">
    <property type="entry name" value="D-amino Acid Aminotransferase, subunit A, domain 2"/>
    <property type="match status" value="1"/>
</dbReference>
<dbReference type="InterPro" id="IPR001544">
    <property type="entry name" value="Aminotrans_IV"/>
</dbReference>
<dbReference type="InterPro" id="IPR018300">
    <property type="entry name" value="Aminotrans_IV_CS"/>
</dbReference>
<dbReference type="InterPro" id="IPR036038">
    <property type="entry name" value="Aminotransferase-like"/>
</dbReference>
<dbReference type="InterPro" id="IPR005785">
    <property type="entry name" value="B_amino_transI"/>
</dbReference>
<dbReference type="InterPro" id="IPR043132">
    <property type="entry name" value="BCAT-like_C"/>
</dbReference>
<dbReference type="InterPro" id="IPR043131">
    <property type="entry name" value="BCAT-like_N"/>
</dbReference>
<dbReference type="InterPro" id="IPR050571">
    <property type="entry name" value="Class-IV_PLP-Dep_Aminotrnsfr"/>
</dbReference>
<dbReference type="NCBIfam" id="TIGR01122">
    <property type="entry name" value="ilvE_I"/>
    <property type="match status" value="1"/>
</dbReference>
<dbReference type="NCBIfam" id="NF005146">
    <property type="entry name" value="PRK06606.1"/>
    <property type="match status" value="1"/>
</dbReference>
<dbReference type="PANTHER" id="PTHR42743">
    <property type="entry name" value="AMINO-ACID AMINOTRANSFERASE"/>
    <property type="match status" value="1"/>
</dbReference>
<dbReference type="PANTHER" id="PTHR42743:SF11">
    <property type="entry name" value="AMINODEOXYCHORISMATE LYASE"/>
    <property type="match status" value="1"/>
</dbReference>
<dbReference type="Pfam" id="PF01063">
    <property type="entry name" value="Aminotran_4"/>
    <property type="match status" value="1"/>
</dbReference>
<dbReference type="SUPFAM" id="SSF56752">
    <property type="entry name" value="D-aminoacid aminotransferase-like PLP-dependent enzymes"/>
    <property type="match status" value="1"/>
</dbReference>
<dbReference type="PROSITE" id="PS00770">
    <property type="entry name" value="AA_TRANSFER_CLASS_4"/>
    <property type="match status" value="1"/>
</dbReference>
<feature type="chain" id="PRO_0000103275" description="Probable branched-chain-amino-acid aminotransferase">
    <location>
        <begin position="1"/>
        <end position="290"/>
    </location>
</feature>
<feature type="modified residue" description="N6-(pyridoxal phosphate)lysine" evidence="1">
    <location>
        <position position="155"/>
    </location>
</feature>